<keyword id="KW-0002">3D-structure</keyword>
<keyword id="KW-0903">Direct protein sequencing</keyword>
<keyword id="KW-1015">Disulfide bond</keyword>
<keyword id="KW-1205">Fibrinolytic toxin</keyword>
<keyword id="KW-0325">Glycoprotein</keyword>
<keyword id="KW-1199">Hemostasis impairing toxin</keyword>
<keyword id="KW-0378">Hydrolase</keyword>
<keyword id="KW-0617">Plasminogen activation</keyword>
<keyword id="KW-0645">Protease</keyword>
<keyword id="KW-0964">Secreted</keyword>
<keyword id="KW-0720">Serine protease</keyword>
<keyword id="KW-0732">Signal</keyword>
<keyword id="KW-0800">Toxin</keyword>
<keyword id="KW-0865">Zymogen</keyword>
<sequence length="258" mass="28334">MELIRVLANLLILQLSYAQKSSELVFGGDECNINEHRSLVVLFNSNGFLCGGTLINQDWVVTAAHCDSNNFQLLFGVHSKKILNEDEQTRDPKEKFFCPNRKKDDEVDKDIMLIKLDSSVSNSEHIAPLSLPSSPPSVGSVCRIMGWGKTIPTKEIYPDVPHCANINILDHAVCRTAYSWRQVANTTLCAGILQGGRDTCHFDSGGPLICNGIFQGIVSWGGHPCGQPGEPGVYTKVFDYLDWIKSIIAGNKDATCPP</sequence>
<evidence type="ECO:0000250" key="1"/>
<evidence type="ECO:0000255" key="2"/>
<evidence type="ECO:0000255" key="3">
    <source>
        <dbReference type="PROSITE-ProRule" id="PRU00274"/>
    </source>
</evidence>
<evidence type="ECO:0000269" key="4">
    <source>
    </source>
</evidence>
<evidence type="ECO:0000269" key="5">
    <source>
    </source>
</evidence>
<evidence type="ECO:0000269" key="6">
    <source>
    </source>
</evidence>
<evidence type="ECO:0000269" key="7">
    <source>
    </source>
</evidence>
<evidence type="ECO:0000305" key="8">
    <source>
    </source>
</evidence>
<evidence type="ECO:0007744" key="9">
    <source>
        <dbReference type="PDB" id="1BQY"/>
    </source>
</evidence>
<evidence type="ECO:0007829" key="10">
    <source>
        <dbReference type="PDB" id="1BQY"/>
    </source>
</evidence>
<proteinExistence type="evidence at protein level"/>
<organism>
    <name type="scientific">Trimeresurus stejnegeri</name>
    <name type="common">Chinese green tree viper</name>
    <name type="synonym">Viridovipera stejnegeri</name>
    <dbReference type="NCBI Taxonomy" id="39682"/>
    <lineage>
        <taxon>Eukaryota</taxon>
        <taxon>Metazoa</taxon>
        <taxon>Chordata</taxon>
        <taxon>Craniata</taxon>
        <taxon>Vertebrata</taxon>
        <taxon>Euteleostomi</taxon>
        <taxon>Lepidosauria</taxon>
        <taxon>Squamata</taxon>
        <taxon>Bifurcata</taxon>
        <taxon>Unidentata</taxon>
        <taxon>Episquamata</taxon>
        <taxon>Toxicofera</taxon>
        <taxon>Serpentes</taxon>
        <taxon>Colubroidea</taxon>
        <taxon>Viperidae</taxon>
        <taxon>Crotalinae</taxon>
        <taxon>Trimeresurus</taxon>
    </lineage>
</organism>
<reference key="1">
    <citation type="journal article" date="1995" name="J. Biol. Chem.">
        <title>A novel plasminogen activator from snake venom. Purification, characterization, and molecular cloning.</title>
        <authorList>
            <person name="Zhang Y."/>
            <person name="Wisner A."/>
            <person name="Xiong Y.L."/>
            <person name="Bon C."/>
        </authorList>
    </citation>
    <scope>NUCLEOTIDE SEQUENCE [MRNA]</scope>
    <scope>PARTIAL PROTEIN SEQUENCE</scope>
    <scope>FUNCTION</scope>
    <scope>SUBCELLULAR LOCATION</scope>
    <scope>TISSUE SPECIFICITY</scope>
    <source>
        <tissue>Venom</tissue>
        <tissue>Venom gland</tissue>
    </source>
</reference>
<reference key="2">
    <citation type="journal article" date="1997" name="J. Biol. Chem.">
        <title>Trimeresurus stejnegeri snake venom plasminogen activator. Site-directed mutagenesis and molecular modeling.</title>
        <authorList>
            <person name="Zhang Y."/>
            <person name="Wisner A."/>
            <person name="Maroun R.C."/>
            <person name="Choumet V."/>
            <person name="Xiong Y."/>
            <person name="Bon C."/>
        </authorList>
    </citation>
    <scope>MUTAGENESIS OF 104-ASP--GLU-106</scope>
</reference>
<reference key="3">
    <citation type="journal article" date="2002" name="Biochemistry">
        <title>The stratagem utilized by the plasminogen activator from the snake Trimeresurus stejnegeri to escape serpins.</title>
        <authorList>
            <person name="Braud S."/>
            <person name="Le Bonniec B.F."/>
            <person name="Bon C."/>
            <person name="Wisner A."/>
        </authorList>
    </citation>
    <scope>MUTAGENESIS OF ASN-44; 44-ASN--ASN-46 AND PHE-202</scope>
    <scope>BIOPHYSICOCHEMICAL PROPERTIES</scope>
</reference>
<reference key="4">
    <citation type="journal article" date="1998" name="Structure">
        <title>The crystal structure of the novel snake venom plasminogen activator TSV-PA: a prototype structure for snake venom serine proteinases.</title>
        <authorList>
            <person name="Parry M.A."/>
            <person name="Jacob U."/>
            <person name="Huber R."/>
            <person name="Wisner A."/>
            <person name="Bon C."/>
            <person name="Bode W."/>
        </authorList>
    </citation>
    <scope>X-RAY CRYSTALLOGRAPHY (2.5 ANGSTROMS) OF 25-258</scope>
    <scope>ACTIVE SITES</scope>
    <scope>DISULFIDE BONDS</scope>
</reference>
<name>VSPPA_TRIST</name>
<comment type="function">
    <text evidence="5">Snake venom serine protease that activates plasminogen.</text>
</comment>
<comment type="biophysicochemical properties">
    <kinetics>
        <KM evidence="4">26 uM for S-2238</KM>
        <KM evidence="4">55 nM for plasminogen</KM>
    </kinetics>
</comment>
<comment type="subunit">
    <text evidence="1">Monomer.</text>
</comment>
<comment type="subcellular location">
    <subcellularLocation>
        <location evidence="5">Secreted</location>
    </subcellularLocation>
</comment>
<comment type="tissue specificity">
    <text evidence="5">Expressed by the venom gland.</text>
</comment>
<comment type="miscellaneous">
    <text evidence="8">Negative results: does not activate nor degrade prothrombin (F2), factor X (F10), or protein C (PROC) and does not clot fibrinogen.</text>
</comment>
<comment type="similarity">
    <text evidence="3">Belongs to the peptidase S1 family. Snake venom subfamily.</text>
</comment>
<protein>
    <recommendedName>
        <fullName>Venom plasminogen activator TSV-PA</fullName>
        <ecNumber>3.4.21.-</ecNumber>
    </recommendedName>
    <alternativeName>
        <fullName>Snake venom serine protease</fullName>
        <shortName>SVSP</shortName>
    </alternativeName>
</protein>
<dbReference type="EC" id="3.4.21.-"/>
<dbReference type="EMBL" id="U21903">
    <property type="protein sequence ID" value="AAC59686.1"/>
    <property type="molecule type" value="mRNA"/>
</dbReference>
<dbReference type="PIR" id="A57290">
    <property type="entry name" value="A57290"/>
</dbReference>
<dbReference type="PDB" id="1BQY">
    <property type="method" value="X-ray"/>
    <property type="resolution" value="2.50 A"/>
    <property type="chains" value="A/B=25-258"/>
</dbReference>
<dbReference type="PDBsum" id="1BQY"/>
<dbReference type="SMR" id="Q91516"/>
<dbReference type="MEROPS" id="S01.186"/>
<dbReference type="SABIO-RK" id="Q91516"/>
<dbReference type="EvolutionaryTrace" id="Q91516"/>
<dbReference type="GO" id="GO:0005576">
    <property type="term" value="C:extracellular region"/>
    <property type="evidence" value="ECO:0007669"/>
    <property type="project" value="UniProtKB-SubCell"/>
</dbReference>
<dbReference type="GO" id="GO:0030141">
    <property type="term" value="C:secretory granule"/>
    <property type="evidence" value="ECO:0007669"/>
    <property type="project" value="TreeGrafter"/>
</dbReference>
<dbReference type="GO" id="GO:0004252">
    <property type="term" value="F:serine-type endopeptidase activity"/>
    <property type="evidence" value="ECO:0007669"/>
    <property type="project" value="InterPro"/>
</dbReference>
<dbReference type="GO" id="GO:0090729">
    <property type="term" value="F:toxin activity"/>
    <property type="evidence" value="ECO:0007669"/>
    <property type="project" value="UniProtKB-KW"/>
</dbReference>
<dbReference type="GO" id="GO:0006508">
    <property type="term" value="P:proteolysis"/>
    <property type="evidence" value="ECO:0007669"/>
    <property type="project" value="UniProtKB-KW"/>
</dbReference>
<dbReference type="CDD" id="cd00190">
    <property type="entry name" value="Tryp_SPc"/>
    <property type="match status" value="1"/>
</dbReference>
<dbReference type="FunFam" id="2.40.10.10:FF:000158">
    <property type="entry name" value="Thrombin-like enzyme saxthrombin"/>
    <property type="match status" value="1"/>
</dbReference>
<dbReference type="FunFam" id="2.40.10.10:FF:000153">
    <property type="entry name" value="Venom plasminogen activator TSV-PA"/>
    <property type="match status" value="1"/>
</dbReference>
<dbReference type="Gene3D" id="2.40.10.10">
    <property type="entry name" value="Trypsin-like serine proteases"/>
    <property type="match status" value="2"/>
</dbReference>
<dbReference type="InterPro" id="IPR009003">
    <property type="entry name" value="Peptidase_S1_PA"/>
</dbReference>
<dbReference type="InterPro" id="IPR043504">
    <property type="entry name" value="Peptidase_S1_PA_chymotrypsin"/>
</dbReference>
<dbReference type="InterPro" id="IPR001314">
    <property type="entry name" value="Peptidase_S1A"/>
</dbReference>
<dbReference type="InterPro" id="IPR001254">
    <property type="entry name" value="Trypsin_dom"/>
</dbReference>
<dbReference type="InterPro" id="IPR018114">
    <property type="entry name" value="TRYPSIN_HIS"/>
</dbReference>
<dbReference type="PANTHER" id="PTHR24271:SF47">
    <property type="entry name" value="KALLIKREIN-1"/>
    <property type="match status" value="1"/>
</dbReference>
<dbReference type="PANTHER" id="PTHR24271">
    <property type="entry name" value="KALLIKREIN-RELATED"/>
    <property type="match status" value="1"/>
</dbReference>
<dbReference type="Pfam" id="PF00089">
    <property type="entry name" value="Trypsin"/>
    <property type="match status" value="1"/>
</dbReference>
<dbReference type="PRINTS" id="PR00722">
    <property type="entry name" value="CHYMOTRYPSIN"/>
</dbReference>
<dbReference type="SMART" id="SM00020">
    <property type="entry name" value="Tryp_SPc"/>
    <property type="match status" value="1"/>
</dbReference>
<dbReference type="SUPFAM" id="SSF50494">
    <property type="entry name" value="Trypsin-like serine proteases"/>
    <property type="match status" value="1"/>
</dbReference>
<dbReference type="PROSITE" id="PS50240">
    <property type="entry name" value="TRYPSIN_DOM"/>
    <property type="match status" value="1"/>
</dbReference>
<dbReference type="PROSITE" id="PS00134">
    <property type="entry name" value="TRYPSIN_HIS"/>
    <property type="match status" value="1"/>
</dbReference>
<feature type="signal peptide" evidence="1">
    <location>
        <begin position="1"/>
        <end position="18"/>
    </location>
</feature>
<feature type="propeptide" id="PRO_0000028421">
    <location>
        <begin position="19"/>
        <end position="24"/>
    </location>
</feature>
<feature type="chain" id="PRO_0000028422" description="Venom plasminogen activator TSV-PA">
    <location>
        <begin position="25"/>
        <end position="258"/>
    </location>
</feature>
<feature type="domain" description="Peptidase S1" evidence="3">
    <location>
        <begin position="25"/>
        <end position="249"/>
    </location>
</feature>
<feature type="active site" description="Charge relay system" evidence="7">
    <location>
        <position position="65"/>
    </location>
</feature>
<feature type="active site" description="Charge relay system" evidence="7">
    <location>
        <position position="110"/>
    </location>
</feature>
<feature type="active site" description="Charge relay system" evidence="7">
    <location>
        <position position="204"/>
    </location>
</feature>
<feature type="glycosylation site" description="N-linked (GlcNAc...) asparagine" evidence="2">
    <location>
        <position position="185"/>
    </location>
</feature>
<feature type="disulfide bond" evidence="7 9">
    <location>
        <begin position="31"/>
        <end position="163"/>
    </location>
</feature>
<feature type="disulfide bond" evidence="3 7 9">
    <location>
        <begin position="50"/>
        <end position="66"/>
    </location>
</feature>
<feature type="disulfide bond" evidence="7 9">
    <location>
        <begin position="98"/>
        <end position="256"/>
    </location>
</feature>
<feature type="disulfide bond" evidence="3 7 9">
    <location>
        <begin position="142"/>
        <end position="210"/>
    </location>
</feature>
<feature type="disulfide bond" evidence="3 7 9">
    <location>
        <begin position="174"/>
        <end position="189"/>
    </location>
</feature>
<feature type="disulfide bond" evidence="3 7 9">
    <location>
        <begin position="200"/>
        <end position="225"/>
    </location>
</feature>
<feature type="mutagenesis site" description="Is inhibited by plasma inhibitors. Is more inhibited by plasma inhibitors; when associated with G-202." evidence="4">
    <original>NSN</original>
    <variation>AKHRRSP</variation>
    <location>
        <begin position="44"/>
        <end position="46"/>
    </location>
</feature>
<feature type="mutagenesis site" description="Is inhibited by plasma inhibitors. Is more inhibited by plasma inhibitors; when associated with G-202." evidence="4">
    <original>N</original>
    <variation>AAAAGG</variation>
    <location>
        <position position="44"/>
    </location>
</feature>
<feature type="mutagenesis site" description="Is inhibited by plasma inhibitors. Is more inhibited by plasma inhibitors; when associated with G-202." evidence="4">
    <original>N</original>
    <variation>RRHRGG</variation>
    <location>
        <position position="44"/>
    </location>
</feature>
<feature type="mutagenesis site" description="Loss of plasminogenolytic and fibrinogenolytic activities." evidence="6">
    <original>DDE</original>
    <variation>NVI</variation>
    <location>
        <begin position="104"/>
        <end position="106"/>
    </location>
</feature>
<feature type="mutagenesis site" description="Is inhibited by plasma inhibitors. Is more inhibited by plasma inhibitors; when associated with 44-N--N-46 or N-44." evidence="4">
    <original>F</original>
    <variation>G</variation>
    <location>
        <position position="202"/>
    </location>
</feature>
<feature type="turn" evidence="10">
    <location>
        <begin position="33"/>
        <end position="38"/>
    </location>
</feature>
<feature type="strand" evidence="10">
    <location>
        <begin position="39"/>
        <end position="44"/>
    </location>
</feature>
<feature type="strand" evidence="10">
    <location>
        <begin position="47"/>
        <end position="54"/>
    </location>
</feature>
<feature type="strand" evidence="10">
    <location>
        <begin position="56"/>
        <end position="62"/>
    </location>
</feature>
<feature type="helix" evidence="10">
    <location>
        <begin position="64"/>
        <end position="66"/>
    </location>
</feature>
<feature type="strand" evidence="10">
    <location>
        <begin position="72"/>
        <end position="76"/>
    </location>
</feature>
<feature type="strand" evidence="10">
    <location>
        <begin position="80"/>
        <end position="82"/>
    </location>
</feature>
<feature type="strand" evidence="10">
    <location>
        <begin position="88"/>
        <end position="90"/>
    </location>
</feature>
<feature type="strand" evidence="10">
    <location>
        <begin position="92"/>
        <end position="96"/>
    </location>
</feature>
<feature type="turn" evidence="10">
    <location>
        <begin position="106"/>
        <end position="109"/>
    </location>
</feature>
<feature type="strand" evidence="10">
    <location>
        <begin position="112"/>
        <end position="118"/>
    </location>
</feature>
<feature type="strand" evidence="10">
    <location>
        <begin position="141"/>
        <end position="148"/>
    </location>
</feature>
<feature type="strand" evidence="10">
    <location>
        <begin position="150"/>
        <end position="154"/>
    </location>
</feature>
<feature type="strand" evidence="10">
    <location>
        <begin position="162"/>
        <end position="169"/>
    </location>
</feature>
<feature type="helix" evidence="10">
    <location>
        <begin position="171"/>
        <end position="177"/>
    </location>
</feature>
<feature type="turn" evidence="10">
    <location>
        <begin position="178"/>
        <end position="180"/>
    </location>
</feature>
<feature type="strand" evidence="10">
    <location>
        <begin position="185"/>
        <end position="191"/>
    </location>
</feature>
<feature type="strand" evidence="10">
    <location>
        <begin position="207"/>
        <end position="210"/>
    </location>
</feature>
<feature type="strand" evidence="10">
    <location>
        <begin position="213"/>
        <end position="220"/>
    </location>
</feature>
<feature type="strand" evidence="10">
    <location>
        <begin position="232"/>
        <end position="236"/>
    </location>
</feature>
<feature type="helix" evidence="10">
    <location>
        <begin position="237"/>
        <end position="240"/>
    </location>
</feature>
<feature type="helix" evidence="10">
    <location>
        <begin position="241"/>
        <end position="249"/>
    </location>
</feature>
<accession>Q91516</accession>